<sequence>MAASCVLLHTGQKMPLIGLGTWKSEPGQVKAAVKYALSVGYRHIDCAAIYGNEPEIGEALKEDVGPGKAVPREELFVTSKLWNTKHHPEDVEPALRKTLADLQLEYLDLYLMHWPYAFERGDNPFPKNADGTICYDSTHYKETWKALEALVAKGLVQALGLSNFNSRQIDDILSVASVRPAVLQVECHPYLAQNELIAHCQARGLEVTAYSPLGSSDRAWRDPDEPVLLEEPVVLALAEKYGRSPAQILLRWQVQRKVICIPKSITPSRILQNIKVFDFTFSPEEMKQLNALNKNWRYIVPMLTVDGKRVPRDAGHPLYPFNDPY</sequence>
<proteinExistence type="evidence at protein level"/>
<protein>
    <recommendedName>
        <fullName>Aldo-keto reductase family 1 member A1</fullName>
        <ecNumber evidence="6">1.1.1.2</ecNumber>
        <ecNumber evidence="6">1.1.1.372</ecNumber>
        <ecNumber evidence="6">1.1.1.54</ecNumber>
    </recommendedName>
    <alternativeName>
        <fullName>Alcohol dehydrogenase [NADP(+)]</fullName>
    </alternativeName>
    <alternativeName>
        <fullName>Aldehyde reductase</fullName>
    </alternativeName>
    <alternativeName>
        <fullName>Glucuronate reductase</fullName>
        <ecNumber evidence="3">1.1.1.19</ecNumber>
    </alternativeName>
    <alternativeName>
        <fullName>Glucuronolactone reductase</fullName>
        <ecNumber evidence="3">1.1.1.20</ecNumber>
    </alternativeName>
    <alternativeName>
        <fullName evidence="13">S-nitroso-CoA reductase</fullName>
        <shortName evidence="13">ScorR</shortName>
        <ecNumber evidence="13">1.6.-.-</ecNumber>
    </alternativeName>
</protein>
<comment type="function">
    <text evidence="2 3 6 7 8 9 10">Catalyzes the NADPH-dependent reduction of a wide variety of carbonyl-containing compounds to their corresponding alcohols (PubMed:10510318, PubMed:30538128). Displays enzymatic activity towards endogenous metabolites such as aromatic and aliphatic aldehydes, ketones, monosaccharides and bile acids, with a preference for negatively charged substrates, such as glucuronate and succinic semialdehyde (PubMed:10510318, PubMed:30538128). Functions as a detoxifiying enzyme by reducing a range of toxic aldehydes (By similarity). Reduces methylglyoxal and 3-deoxyglucosone, which are present at elevated levels under hyperglycemic conditions and are cytotoxic (By similarity). Involved also in the detoxification of lipid-derived aldehydes like acrolein (By similarity). Plays a role in the activation of procarcinogens, such as polycyclic aromatic hydrocarbon trans-dihydrodiols, and in the metabolism of various xenobiotics and drugs, including the anthracyclines doxorubicin (DOX) and daunorubicin (DAUN) (PubMed:11306097, PubMed:18276838). Also acts as an inhibitor of protein S-nitrosylation by mediating degradation of S-nitroso-coenzyme A (S-nitroso-CoA), a cofactor required to S-nitrosylate proteins (PubMed:30538128). S-nitroso-CoA reductase activity is involved in reprogramming intermediary metabolism in renal proximal tubules, notably by inhibiting protein S-nitrosylation of isoform 2 of PKM (PKM2) (By similarity). Also acts as a S-nitroso-glutathione reductase by catalyzing the NADPH-dependent reduction of S-nitrosoglutathione (PubMed:31649033). Displays no reductase activity towards retinoids (By similarity).</text>
</comment>
<comment type="catalytic activity">
    <reaction evidence="6">
        <text>a primary alcohol + NADP(+) = an aldehyde + NADPH + H(+)</text>
        <dbReference type="Rhea" id="RHEA:15937"/>
        <dbReference type="ChEBI" id="CHEBI:15378"/>
        <dbReference type="ChEBI" id="CHEBI:15734"/>
        <dbReference type="ChEBI" id="CHEBI:17478"/>
        <dbReference type="ChEBI" id="CHEBI:57783"/>
        <dbReference type="ChEBI" id="CHEBI:58349"/>
        <dbReference type="EC" id="1.1.1.2"/>
    </reaction>
</comment>
<comment type="catalytic activity">
    <reaction evidence="6">
        <text>allyl alcohol + NADP(+) = acrolein + NADPH + H(+)</text>
        <dbReference type="Rhea" id="RHEA:12168"/>
        <dbReference type="ChEBI" id="CHEBI:15368"/>
        <dbReference type="ChEBI" id="CHEBI:15378"/>
        <dbReference type="ChEBI" id="CHEBI:16605"/>
        <dbReference type="ChEBI" id="CHEBI:57783"/>
        <dbReference type="ChEBI" id="CHEBI:58349"/>
        <dbReference type="EC" id="1.1.1.54"/>
    </reaction>
</comment>
<comment type="catalytic activity">
    <reaction evidence="6 9">
        <text>glycerol + NADP(+) = D-glyceraldehyde + NADPH + H(+)</text>
        <dbReference type="Rhea" id="RHEA:23592"/>
        <dbReference type="ChEBI" id="CHEBI:15378"/>
        <dbReference type="ChEBI" id="CHEBI:17378"/>
        <dbReference type="ChEBI" id="CHEBI:17754"/>
        <dbReference type="ChEBI" id="CHEBI:57783"/>
        <dbReference type="ChEBI" id="CHEBI:58349"/>
        <dbReference type="EC" id="1.1.1.372"/>
    </reaction>
</comment>
<comment type="catalytic activity">
    <reaction evidence="6">
        <text>glycerol + NADP(+) = L-glyceraldehyde + NADPH + H(+)</text>
        <dbReference type="Rhea" id="RHEA:38111"/>
        <dbReference type="ChEBI" id="CHEBI:15378"/>
        <dbReference type="ChEBI" id="CHEBI:17754"/>
        <dbReference type="ChEBI" id="CHEBI:27975"/>
        <dbReference type="ChEBI" id="CHEBI:57783"/>
        <dbReference type="ChEBI" id="CHEBI:58349"/>
        <dbReference type="EC" id="1.1.1.372"/>
    </reaction>
</comment>
<comment type="catalytic activity">
    <reaction evidence="6">
        <text>hydroxyacetone + NADP(+) = methylglyoxal + NADPH + H(+)</text>
        <dbReference type="Rhea" id="RHEA:27986"/>
        <dbReference type="ChEBI" id="CHEBI:15378"/>
        <dbReference type="ChEBI" id="CHEBI:17158"/>
        <dbReference type="ChEBI" id="CHEBI:27957"/>
        <dbReference type="ChEBI" id="CHEBI:57783"/>
        <dbReference type="ChEBI" id="CHEBI:58349"/>
    </reaction>
</comment>
<comment type="catalytic activity">
    <reaction evidence="6">
        <text>a 4-hydroxynonen-1-ol + NADP(+) = a 4-hydroxynonenal + NADPH + H(+)</text>
        <dbReference type="Rhea" id="RHEA:58336"/>
        <dbReference type="ChEBI" id="CHEBI:15378"/>
        <dbReference type="ChEBI" id="CHEBI:57783"/>
        <dbReference type="ChEBI" id="CHEBI:58349"/>
        <dbReference type="ChEBI" id="CHEBI:142593"/>
        <dbReference type="ChEBI" id="CHEBI:142606"/>
    </reaction>
</comment>
<comment type="catalytic activity">
    <reaction evidence="3">
        <text>3-deoxyfructose + NADP(+) = 3-deoxyglucosone + NADPH + H(+)</text>
        <dbReference type="Rhea" id="RHEA:58668"/>
        <dbReference type="ChEBI" id="CHEBI:15378"/>
        <dbReference type="ChEBI" id="CHEBI:57783"/>
        <dbReference type="ChEBI" id="CHEBI:58349"/>
        <dbReference type="ChEBI" id="CHEBI:60777"/>
        <dbReference type="ChEBI" id="CHEBI:142685"/>
    </reaction>
</comment>
<comment type="catalytic activity">
    <reaction evidence="6 9">
        <text>L-gulonate + NADP(+) = aldehydo-D-glucuronate + NADPH + H(+)</text>
        <dbReference type="Rhea" id="RHEA:14909"/>
        <dbReference type="ChEBI" id="CHEBI:13115"/>
        <dbReference type="ChEBI" id="CHEBI:15378"/>
        <dbReference type="ChEBI" id="CHEBI:57783"/>
        <dbReference type="ChEBI" id="CHEBI:58349"/>
        <dbReference type="ChEBI" id="CHEBI:142686"/>
        <dbReference type="EC" id="1.1.1.19"/>
    </reaction>
</comment>
<comment type="catalytic activity">
    <reaction evidence="3">
        <text>L-gulono-1,4-lactone + NADP(+) = D-glucurono-3,6-lactone + NADPH + H(+)</text>
        <dbReference type="Rhea" id="RHEA:18925"/>
        <dbReference type="ChEBI" id="CHEBI:15378"/>
        <dbReference type="ChEBI" id="CHEBI:17587"/>
        <dbReference type="ChEBI" id="CHEBI:18268"/>
        <dbReference type="ChEBI" id="CHEBI:57783"/>
        <dbReference type="ChEBI" id="CHEBI:58349"/>
        <dbReference type="EC" id="1.1.1.20"/>
    </reaction>
</comment>
<comment type="catalytic activity">
    <reaction evidence="6">
        <text>pyridine 3-methanol + NADP(+) = pyridine-3-carbaldehyde + NADPH + H(+)</text>
        <dbReference type="Rhea" id="RHEA:58776"/>
        <dbReference type="ChEBI" id="CHEBI:15378"/>
        <dbReference type="ChEBI" id="CHEBI:28345"/>
        <dbReference type="ChEBI" id="CHEBI:45213"/>
        <dbReference type="ChEBI" id="CHEBI:57783"/>
        <dbReference type="ChEBI" id="CHEBI:58349"/>
    </reaction>
</comment>
<comment type="catalytic activity">
    <reaction evidence="9">
        <text>S-nitroso-CoA + NADPH + H(+) = sulfinamide-CoA + NADP(+)</text>
        <dbReference type="Rhea" id="RHEA:78375"/>
        <dbReference type="ChEBI" id="CHEBI:15378"/>
        <dbReference type="ChEBI" id="CHEBI:57783"/>
        <dbReference type="ChEBI" id="CHEBI:58349"/>
        <dbReference type="ChEBI" id="CHEBI:145546"/>
        <dbReference type="ChEBI" id="CHEBI:145548"/>
    </reaction>
    <physiologicalReaction direction="left-to-right" evidence="9">
        <dbReference type="Rhea" id="RHEA:78376"/>
    </physiologicalReaction>
</comment>
<comment type="catalytic activity">
    <reaction evidence="10">
        <text>S-nitrosoglutathione + NADPH + H(+) = S-(hydroxysulfenamide)glutathione + NADP(+)</text>
        <dbReference type="Rhea" id="RHEA:63500"/>
        <dbReference type="ChEBI" id="CHEBI:15378"/>
        <dbReference type="ChEBI" id="CHEBI:57783"/>
        <dbReference type="ChEBI" id="CHEBI:58349"/>
        <dbReference type="ChEBI" id="CHEBI:145544"/>
        <dbReference type="ChEBI" id="CHEBI:229723"/>
    </reaction>
</comment>
<comment type="biophysicochemical properties">
    <kinetics>
        <KM evidence="9">58 uM for S-nitroso-CoA</KM>
        <KM evidence="9">4555 uM for D-glucuronate</KM>
        <KM evidence="9">2554 uM for D,L-glyceraldehyde</KM>
        <KM evidence="10">184 uM for S-nitroso-glutathione</KM>
        <Vmax evidence="6">1426.0 nmol/min/mg enzyme for 4-hydroxynonenal</Vmax>
        <Vmax evidence="6">268.0 nmol/min/mg enzyme for acrolein</Vmax>
        <Vmax evidence="6">3460.0 nmol/min/mg enzyme for pyridine-3-carbaldehyde</Vmax>
        <Vmax evidence="6">4273.0 nmol/min/mg enzyme for methylglyoxal</Vmax>
        <Vmax evidence="6">1263.0 nmol/min/mg enzyme for D,L-glyceraldehyde</Vmax>
        <Vmax evidence="6">5562.0 nmol/min/mg enzyme for D-glucuronic acid</Vmax>
        <Vmax evidence="6">4983.0 nmol/min/mg enzyme for succinic semialdehyde</Vmax>
        <text evidence="9 10">kcat is 959 min(-1) for S-nitroso-CoA as substrate (PubMed:30538128). kcat is 604 min(-1) for D-glucuronate as substrate (PubMed:30538128). kcat is 306 min(-1) for D,L-glyceraldehyde as substrate (PubMed:30538128). kcat is 948 min(-1) for S-nitroso-glutathione as substrate (PubMed:31649033).</text>
    </kinetics>
</comment>
<comment type="subunit">
    <text evidence="2">Monomer.</text>
</comment>
<comment type="interaction">
    <interactant intactId="EBI-372388">
        <id>P14550</id>
    </interactant>
    <interactant intactId="EBI-466029">
        <id>P42858</id>
        <label>HTT</label>
    </interactant>
    <organismsDiffer>false</organismsDiffer>
    <experiments>6</experiments>
</comment>
<comment type="interaction">
    <interactant intactId="EBI-372388">
        <id>P14550</id>
    </interactant>
    <interactant intactId="EBI-750109">
        <id>Q9NYB0</id>
        <label>TERF2IP</label>
    </interactant>
    <organismsDiffer>false</organismsDiffer>
    <experiments>2</experiments>
</comment>
<comment type="interaction">
    <interactant intactId="EBI-372388">
        <id>P14550</id>
    </interactant>
    <interactant intactId="EBI-720609">
        <id>O76024</id>
        <label>WFS1</label>
    </interactant>
    <organismsDiffer>false</organismsDiffer>
    <experiments>3</experiments>
</comment>
<comment type="subcellular location">
    <subcellularLocation>
        <location evidence="4">Cytoplasm</location>
        <location evidence="4">Cytosol</location>
    </subcellularLocation>
    <subcellularLocation>
        <location evidence="4">Apical cell membrane</location>
    </subcellularLocation>
</comment>
<comment type="tissue specificity">
    <text evidence="5 6 7">Widely expressed. Highly expressed in kidney, salivary gland and liver. Detected in trachea, stomach, brain, lung, prostate, placenta, mammary gland, small intestine and lung.</text>
</comment>
<comment type="similarity">
    <text evidence="14">Belongs to the aldo/keto reductase family.</text>
</comment>
<organism>
    <name type="scientific">Homo sapiens</name>
    <name type="common">Human</name>
    <dbReference type="NCBI Taxonomy" id="9606"/>
    <lineage>
        <taxon>Eukaryota</taxon>
        <taxon>Metazoa</taxon>
        <taxon>Chordata</taxon>
        <taxon>Craniata</taxon>
        <taxon>Vertebrata</taxon>
        <taxon>Euteleostomi</taxon>
        <taxon>Mammalia</taxon>
        <taxon>Eutheria</taxon>
        <taxon>Euarchontoglires</taxon>
        <taxon>Primates</taxon>
        <taxon>Haplorrhini</taxon>
        <taxon>Catarrhini</taxon>
        <taxon>Hominidae</taxon>
        <taxon>Homo</taxon>
    </lineage>
</organism>
<reference key="1">
    <citation type="journal article" date="1989" name="J. Biol. Chem.">
        <title>The aldo-keto reductase superfamily. cDNAs and deduced amino acid sequences of human aldehyde and aldose reductases.</title>
        <authorList>
            <person name="Bohren K.M."/>
            <person name="Bullock B."/>
            <person name="Wermuth B."/>
            <person name="Gabbay K.H."/>
        </authorList>
    </citation>
    <scope>NUCLEOTIDE SEQUENCE [MRNA]</scope>
    <scope>PARTIAL PROTEIN SEQUENCE</scope>
    <source>
        <tissue>Liver</tissue>
    </source>
</reference>
<reference key="2">
    <citation type="journal article" date="1999" name="Cytogenet. Cell Genet.">
        <title>The structural organization of the human aldehyde reductase gene, AKR1A1, and mapping to chromosome 1p33--&gt;p32.</title>
        <authorList>
            <person name="Fujii J."/>
            <person name="Hamaoka R."/>
            <person name="Matsumoto A."/>
            <person name="Fujii T."/>
            <person name="Yamaguchi Y."/>
            <person name="Egashira M."/>
            <person name="Miyoshi O."/>
            <person name="Niikawa N."/>
            <person name="Taniguchi N."/>
        </authorList>
    </citation>
    <scope>NUCLEOTIDE SEQUENCE [GENOMIC DNA]</scope>
</reference>
<reference key="3">
    <citation type="journal article" date="1999" name="Genomics">
        <title>Characterization of the human aldehyde reductase gene and promoter.</title>
        <authorList>
            <person name="Barski O.A."/>
            <person name="Gabbay K.H."/>
            <person name="Bohren K.M."/>
        </authorList>
    </citation>
    <scope>NUCLEOTIDE SEQUENCE [GENOMIC DNA]</scope>
    <scope>TISSUE SPECIFICITY</scope>
</reference>
<reference key="4">
    <citation type="journal article" date="2004" name="Nat. Genet.">
        <title>Complete sequencing and characterization of 21,243 full-length human cDNAs.</title>
        <authorList>
            <person name="Ota T."/>
            <person name="Suzuki Y."/>
            <person name="Nishikawa T."/>
            <person name="Otsuki T."/>
            <person name="Sugiyama T."/>
            <person name="Irie R."/>
            <person name="Wakamatsu A."/>
            <person name="Hayashi K."/>
            <person name="Sato H."/>
            <person name="Nagai K."/>
            <person name="Kimura K."/>
            <person name="Makita H."/>
            <person name="Sekine M."/>
            <person name="Obayashi M."/>
            <person name="Nishi T."/>
            <person name="Shibahara T."/>
            <person name="Tanaka T."/>
            <person name="Ishii S."/>
            <person name="Yamamoto J."/>
            <person name="Saito K."/>
            <person name="Kawai Y."/>
            <person name="Isono Y."/>
            <person name="Nakamura Y."/>
            <person name="Nagahari K."/>
            <person name="Murakami K."/>
            <person name="Yasuda T."/>
            <person name="Iwayanagi T."/>
            <person name="Wagatsuma M."/>
            <person name="Shiratori A."/>
            <person name="Sudo H."/>
            <person name="Hosoiri T."/>
            <person name="Kaku Y."/>
            <person name="Kodaira H."/>
            <person name="Kondo H."/>
            <person name="Sugawara M."/>
            <person name="Takahashi M."/>
            <person name="Kanda K."/>
            <person name="Yokoi T."/>
            <person name="Furuya T."/>
            <person name="Kikkawa E."/>
            <person name="Omura Y."/>
            <person name="Abe K."/>
            <person name="Kamihara K."/>
            <person name="Katsuta N."/>
            <person name="Sato K."/>
            <person name="Tanikawa M."/>
            <person name="Yamazaki M."/>
            <person name="Ninomiya K."/>
            <person name="Ishibashi T."/>
            <person name="Yamashita H."/>
            <person name="Murakawa K."/>
            <person name="Fujimori K."/>
            <person name="Tanai H."/>
            <person name="Kimata M."/>
            <person name="Watanabe M."/>
            <person name="Hiraoka S."/>
            <person name="Chiba Y."/>
            <person name="Ishida S."/>
            <person name="Ono Y."/>
            <person name="Takiguchi S."/>
            <person name="Watanabe S."/>
            <person name="Yosida M."/>
            <person name="Hotuta T."/>
            <person name="Kusano J."/>
            <person name="Kanehori K."/>
            <person name="Takahashi-Fujii A."/>
            <person name="Hara H."/>
            <person name="Tanase T.-O."/>
            <person name="Nomura Y."/>
            <person name="Togiya S."/>
            <person name="Komai F."/>
            <person name="Hara R."/>
            <person name="Takeuchi K."/>
            <person name="Arita M."/>
            <person name="Imose N."/>
            <person name="Musashino K."/>
            <person name="Yuuki H."/>
            <person name="Oshima A."/>
            <person name="Sasaki N."/>
            <person name="Aotsuka S."/>
            <person name="Yoshikawa Y."/>
            <person name="Matsunawa H."/>
            <person name="Ichihara T."/>
            <person name="Shiohata N."/>
            <person name="Sano S."/>
            <person name="Moriya S."/>
            <person name="Momiyama H."/>
            <person name="Satoh N."/>
            <person name="Takami S."/>
            <person name="Terashima Y."/>
            <person name="Suzuki O."/>
            <person name="Nakagawa S."/>
            <person name="Senoh A."/>
            <person name="Mizoguchi H."/>
            <person name="Goto Y."/>
            <person name="Shimizu F."/>
            <person name="Wakebe H."/>
            <person name="Hishigaki H."/>
            <person name="Watanabe T."/>
            <person name="Sugiyama A."/>
            <person name="Takemoto M."/>
            <person name="Kawakami B."/>
            <person name="Yamazaki M."/>
            <person name="Watanabe K."/>
            <person name="Kumagai A."/>
            <person name="Itakura S."/>
            <person name="Fukuzumi Y."/>
            <person name="Fujimori Y."/>
            <person name="Komiyama M."/>
            <person name="Tashiro H."/>
            <person name="Tanigami A."/>
            <person name="Fujiwara T."/>
            <person name="Ono T."/>
            <person name="Yamada K."/>
            <person name="Fujii Y."/>
            <person name="Ozaki K."/>
            <person name="Hirao M."/>
            <person name="Ohmori Y."/>
            <person name="Kawabata A."/>
            <person name="Hikiji T."/>
            <person name="Kobatake N."/>
            <person name="Inagaki H."/>
            <person name="Ikema Y."/>
            <person name="Okamoto S."/>
            <person name="Okitani R."/>
            <person name="Kawakami T."/>
            <person name="Noguchi S."/>
            <person name="Itoh T."/>
            <person name="Shigeta K."/>
            <person name="Senba T."/>
            <person name="Matsumura K."/>
            <person name="Nakajima Y."/>
            <person name="Mizuno T."/>
            <person name="Morinaga M."/>
            <person name="Sasaki M."/>
            <person name="Togashi T."/>
            <person name="Oyama M."/>
            <person name="Hata H."/>
            <person name="Watanabe M."/>
            <person name="Komatsu T."/>
            <person name="Mizushima-Sugano J."/>
            <person name="Satoh T."/>
            <person name="Shirai Y."/>
            <person name="Takahashi Y."/>
            <person name="Nakagawa K."/>
            <person name="Okumura K."/>
            <person name="Nagase T."/>
            <person name="Nomura N."/>
            <person name="Kikuchi H."/>
            <person name="Masuho Y."/>
            <person name="Yamashita R."/>
            <person name="Nakai K."/>
            <person name="Yada T."/>
            <person name="Nakamura Y."/>
            <person name="Ohara O."/>
            <person name="Isogai T."/>
            <person name="Sugano S."/>
        </authorList>
    </citation>
    <scope>NUCLEOTIDE SEQUENCE [LARGE SCALE MRNA]</scope>
    <source>
        <tissue>Uterus</tissue>
    </source>
</reference>
<reference key="5">
    <citation type="submission" date="2004-06" db="EMBL/GenBank/DDBJ databases">
        <title>Cloning of human full open reading frames in Gateway(TM) system entry vector (pDONR201).</title>
        <authorList>
            <person name="Ebert L."/>
            <person name="Schick M."/>
            <person name="Neubert P."/>
            <person name="Schatten R."/>
            <person name="Henze S."/>
            <person name="Korn B."/>
        </authorList>
    </citation>
    <scope>NUCLEOTIDE SEQUENCE [LARGE SCALE MRNA]</scope>
</reference>
<reference key="6">
    <citation type="submission" date="2004-10" db="EMBL/GenBank/DDBJ databases">
        <title>Cloning of human full-length CDSs in BD Creator(TM) system donor vector.</title>
        <authorList>
            <person name="Kalnine N."/>
            <person name="Chen X."/>
            <person name="Rolfs A."/>
            <person name="Halleck A."/>
            <person name="Hines L."/>
            <person name="Eisenstein S."/>
            <person name="Koundinya M."/>
            <person name="Raphael J."/>
            <person name="Moreira D."/>
            <person name="Kelley T."/>
            <person name="LaBaer J."/>
            <person name="Lin Y."/>
            <person name="Phelan M."/>
            <person name="Farmer A."/>
        </authorList>
    </citation>
    <scope>NUCLEOTIDE SEQUENCE [LARGE SCALE MRNA]</scope>
</reference>
<reference key="7">
    <citation type="journal article" date="2006" name="Nature">
        <title>The DNA sequence and biological annotation of human chromosome 1.</title>
        <authorList>
            <person name="Gregory S.G."/>
            <person name="Barlow K.F."/>
            <person name="McLay K.E."/>
            <person name="Kaul R."/>
            <person name="Swarbreck D."/>
            <person name="Dunham A."/>
            <person name="Scott C.E."/>
            <person name="Howe K.L."/>
            <person name="Woodfine K."/>
            <person name="Spencer C.C.A."/>
            <person name="Jones M.C."/>
            <person name="Gillson C."/>
            <person name="Searle S."/>
            <person name="Zhou Y."/>
            <person name="Kokocinski F."/>
            <person name="McDonald L."/>
            <person name="Evans R."/>
            <person name="Phillips K."/>
            <person name="Atkinson A."/>
            <person name="Cooper R."/>
            <person name="Jones C."/>
            <person name="Hall R.E."/>
            <person name="Andrews T.D."/>
            <person name="Lloyd C."/>
            <person name="Ainscough R."/>
            <person name="Almeida J.P."/>
            <person name="Ambrose K.D."/>
            <person name="Anderson F."/>
            <person name="Andrew R.W."/>
            <person name="Ashwell R.I.S."/>
            <person name="Aubin K."/>
            <person name="Babbage A.K."/>
            <person name="Bagguley C.L."/>
            <person name="Bailey J."/>
            <person name="Beasley H."/>
            <person name="Bethel G."/>
            <person name="Bird C.P."/>
            <person name="Bray-Allen S."/>
            <person name="Brown J.Y."/>
            <person name="Brown A.J."/>
            <person name="Buckley D."/>
            <person name="Burton J."/>
            <person name="Bye J."/>
            <person name="Carder C."/>
            <person name="Chapman J.C."/>
            <person name="Clark S.Y."/>
            <person name="Clarke G."/>
            <person name="Clee C."/>
            <person name="Cobley V."/>
            <person name="Collier R.E."/>
            <person name="Corby N."/>
            <person name="Coville G.J."/>
            <person name="Davies J."/>
            <person name="Deadman R."/>
            <person name="Dunn M."/>
            <person name="Earthrowl M."/>
            <person name="Ellington A.G."/>
            <person name="Errington H."/>
            <person name="Frankish A."/>
            <person name="Frankland J."/>
            <person name="French L."/>
            <person name="Garner P."/>
            <person name="Garnett J."/>
            <person name="Gay L."/>
            <person name="Ghori M.R.J."/>
            <person name="Gibson R."/>
            <person name="Gilby L.M."/>
            <person name="Gillett W."/>
            <person name="Glithero R.J."/>
            <person name="Grafham D.V."/>
            <person name="Griffiths C."/>
            <person name="Griffiths-Jones S."/>
            <person name="Grocock R."/>
            <person name="Hammond S."/>
            <person name="Harrison E.S.I."/>
            <person name="Hart E."/>
            <person name="Haugen E."/>
            <person name="Heath P.D."/>
            <person name="Holmes S."/>
            <person name="Holt K."/>
            <person name="Howden P.J."/>
            <person name="Hunt A.R."/>
            <person name="Hunt S.E."/>
            <person name="Hunter G."/>
            <person name="Isherwood J."/>
            <person name="James R."/>
            <person name="Johnson C."/>
            <person name="Johnson D."/>
            <person name="Joy A."/>
            <person name="Kay M."/>
            <person name="Kershaw J.K."/>
            <person name="Kibukawa M."/>
            <person name="Kimberley A.M."/>
            <person name="King A."/>
            <person name="Knights A.J."/>
            <person name="Lad H."/>
            <person name="Laird G."/>
            <person name="Lawlor S."/>
            <person name="Leongamornlert D.A."/>
            <person name="Lloyd D.M."/>
            <person name="Loveland J."/>
            <person name="Lovell J."/>
            <person name="Lush M.J."/>
            <person name="Lyne R."/>
            <person name="Martin S."/>
            <person name="Mashreghi-Mohammadi M."/>
            <person name="Matthews L."/>
            <person name="Matthews N.S.W."/>
            <person name="McLaren S."/>
            <person name="Milne S."/>
            <person name="Mistry S."/>
            <person name="Moore M.J.F."/>
            <person name="Nickerson T."/>
            <person name="O'Dell C.N."/>
            <person name="Oliver K."/>
            <person name="Palmeiri A."/>
            <person name="Palmer S.A."/>
            <person name="Parker A."/>
            <person name="Patel D."/>
            <person name="Pearce A.V."/>
            <person name="Peck A.I."/>
            <person name="Pelan S."/>
            <person name="Phelps K."/>
            <person name="Phillimore B.J."/>
            <person name="Plumb R."/>
            <person name="Rajan J."/>
            <person name="Raymond C."/>
            <person name="Rouse G."/>
            <person name="Saenphimmachak C."/>
            <person name="Sehra H.K."/>
            <person name="Sheridan E."/>
            <person name="Shownkeen R."/>
            <person name="Sims S."/>
            <person name="Skuce C.D."/>
            <person name="Smith M."/>
            <person name="Steward C."/>
            <person name="Subramanian S."/>
            <person name="Sycamore N."/>
            <person name="Tracey A."/>
            <person name="Tromans A."/>
            <person name="Van Helmond Z."/>
            <person name="Wall M."/>
            <person name="Wallis J.M."/>
            <person name="White S."/>
            <person name="Whitehead S.L."/>
            <person name="Wilkinson J.E."/>
            <person name="Willey D.L."/>
            <person name="Williams H."/>
            <person name="Wilming L."/>
            <person name="Wray P.W."/>
            <person name="Wu Z."/>
            <person name="Coulson A."/>
            <person name="Vaudin M."/>
            <person name="Sulston J.E."/>
            <person name="Durbin R.M."/>
            <person name="Hubbard T."/>
            <person name="Wooster R."/>
            <person name="Dunham I."/>
            <person name="Carter N.P."/>
            <person name="McVean G."/>
            <person name="Ross M.T."/>
            <person name="Harrow J."/>
            <person name="Olson M.V."/>
            <person name="Beck S."/>
            <person name="Rogers J."/>
            <person name="Bentley D.R."/>
        </authorList>
    </citation>
    <scope>NUCLEOTIDE SEQUENCE [LARGE SCALE GENOMIC DNA]</scope>
</reference>
<reference key="8">
    <citation type="submission" date="2005-09" db="EMBL/GenBank/DDBJ databases">
        <authorList>
            <person name="Mural R.J."/>
            <person name="Istrail S."/>
            <person name="Sutton G.G."/>
            <person name="Florea L."/>
            <person name="Halpern A.L."/>
            <person name="Mobarry C.M."/>
            <person name="Lippert R."/>
            <person name="Walenz B."/>
            <person name="Shatkay H."/>
            <person name="Dew I."/>
            <person name="Miller J.R."/>
            <person name="Flanigan M.J."/>
            <person name="Edwards N.J."/>
            <person name="Bolanos R."/>
            <person name="Fasulo D."/>
            <person name="Halldorsson B.V."/>
            <person name="Hannenhalli S."/>
            <person name="Turner R."/>
            <person name="Yooseph S."/>
            <person name="Lu F."/>
            <person name="Nusskern D.R."/>
            <person name="Shue B.C."/>
            <person name="Zheng X.H."/>
            <person name="Zhong F."/>
            <person name="Delcher A.L."/>
            <person name="Huson D.H."/>
            <person name="Kravitz S.A."/>
            <person name="Mouchard L."/>
            <person name="Reinert K."/>
            <person name="Remington K.A."/>
            <person name="Clark A.G."/>
            <person name="Waterman M.S."/>
            <person name="Eichler E.E."/>
            <person name="Adams M.D."/>
            <person name="Hunkapiller M.W."/>
            <person name="Myers E.W."/>
            <person name="Venter J.C."/>
        </authorList>
    </citation>
    <scope>NUCLEOTIDE SEQUENCE [LARGE SCALE GENOMIC DNA]</scope>
</reference>
<reference key="9">
    <citation type="journal article" date="2004" name="Genome Res.">
        <title>The status, quality, and expansion of the NIH full-length cDNA project: the Mammalian Gene Collection (MGC).</title>
        <authorList>
            <consortium name="The MGC Project Team"/>
        </authorList>
    </citation>
    <scope>NUCLEOTIDE SEQUENCE [LARGE SCALE MRNA]</scope>
    <source>
        <tissue>Colon</tissue>
        <tissue>Kidney</tissue>
    </source>
</reference>
<reference key="10">
    <citation type="journal article" date="1987" name="Prog. Clin. Biol. Res.">
        <title>Primary structure of aldehyde reductase from human liver.</title>
        <authorList>
            <person name="Wermuth B."/>
            <person name="Omar A."/>
            <person name="Forster A."/>
            <person name="di Francesco C."/>
            <person name="Wolf M."/>
            <person name="von Wartburg J.-P."/>
            <person name="Bullock B."/>
            <person name="Gabbay K.H."/>
        </authorList>
    </citation>
    <scope>PROTEIN SEQUENCE OF 2-325</scope>
    <source>
        <tissue>Liver</tissue>
    </source>
</reference>
<reference key="11">
    <citation type="journal article" date="1995" name="Biochemistry">
        <title>Mechanism of human aldehyde reductase: characterization of the active site pocket.</title>
        <authorList>
            <person name="Barski O.A."/>
            <person name="Gabbay K.H."/>
            <person name="Grimshaw C.E."/>
            <person name="Bohren K.M."/>
        </authorList>
    </citation>
    <scope>MUTAGENESIS OF TYR-50; LYS-80; HIS-113; ILE-299 AND VAL-300</scope>
</reference>
<reference key="12">
    <citation type="journal article" date="1999" name="Biochem. J.">
        <title>Major differences exist in the function and tissue-specific expression of human aflatoxin B1 aldehyde reductase and the principal human aldo-keto reductase AKR1 family members.</title>
        <authorList>
            <person name="O'Connor T."/>
            <person name="Ireland L.S."/>
            <person name="Harrison D.J."/>
            <person name="Hayes J.D."/>
        </authorList>
    </citation>
    <scope>FUNCTION</scope>
    <scope>TISSUE SPECIFICITY</scope>
    <scope>CATALYTIC ACTIVITY</scope>
    <scope>BIOPHYSICOCHEMICAL PROPERTIES</scope>
    <scope>SUBSTRATE SPECIFICITY</scope>
</reference>
<reference key="13">
    <citation type="journal article" date="2001" name="Chem. Biol. Interact.">
        <title>Metabolic activation of polycyclic aromatic hydrocarbon trans-dihydrodiols by ubiquitously expressed aldehyde reductase (AKR1A1).</title>
        <authorList>
            <person name="Palackal N.T."/>
            <person name="Burczynski M.E."/>
            <person name="Harvey R.G."/>
            <person name="Penning T.M."/>
        </authorList>
    </citation>
    <scope>FUNCTION</scope>
    <scope>TISSUE SPECIFICITY</scope>
</reference>
<reference key="14">
    <citation type="journal article" date="2008" name="Drug Metab. Dispos.">
        <title>Two allelic variants of aldo-keto reductase 1A1 exhibit reduced in vitro metabolism of daunorubicin.</title>
        <authorList>
            <person name="Bains O.S."/>
            <person name="Takahashi R.H."/>
            <person name="Pfeifer T.A."/>
            <person name="Grigliatti T.A."/>
            <person name="Reid R.E."/>
            <person name="Riggs K.W."/>
        </authorList>
    </citation>
    <scope>FUNCTION</scope>
    <scope>CHARACTERIZATION OF VARIANTS SER-52 AND ASP-55</scope>
</reference>
<reference key="15">
    <citation type="journal article" date="2009" name="Anal. Chem.">
        <title>Lys-N and trypsin cover complementary parts of the phosphoproteome in a refined SCX-based approach.</title>
        <authorList>
            <person name="Gauci S."/>
            <person name="Helbig A.O."/>
            <person name="Slijper M."/>
            <person name="Krijgsveld J."/>
            <person name="Heck A.J."/>
            <person name="Mohammed S."/>
        </authorList>
    </citation>
    <scope>ACETYLATION [LARGE SCALE ANALYSIS] AT ALA-2</scope>
    <scope>CLEAVAGE OF INITIATOR METHIONINE [LARGE SCALE ANALYSIS]</scope>
    <scope>IDENTIFICATION BY MASS SPECTROMETRY [LARGE SCALE ANALYSIS]</scope>
</reference>
<reference key="16">
    <citation type="journal article" date="2011" name="BMC Syst. Biol.">
        <title>Initial characterization of the human central proteome.</title>
        <authorList>
            <person name="Burkard T.R."/>
            <person name="Planyavsky M."/>
            <person name="Kaupe I."/>
            <person name="Breitwieser F.P."/>
            <person name="Buerckstuemmer T."/>
            <person name="Bennett K.L."/>
            <person name="Superti-Furga G."/>
            <person name="Colinge J."/>
        </authorList>
    </citation>
    <scope>IDENTIFICATION BY MASS SPECTROMETRY [LARGE SCALE ANALYSIS]</scope>
</reference>
<reference key="17">
    <citation type="journal article" date="2013" name="J. Proteome Res.">
        <title>Toward a comprehensive characterization of a human cancer cell phosphoproteome.</title>
        <authorList>
            <person name="Zhou H."/>
            <person name="Di Palma S."/>
            <person name="Preisinger C."/>
            <person name="Peng M."/>
            <person name="Polat A.N."/>
            <person name="Heck A.J."/>
            <person name="Mohammed S."/>
        </authorList>
    </citation>
    <scope>PHOSPHORYLATION [LARGE SCALE ANALYSIS] AT SER-211</scope>
    <scope>IDENTIFICATION BY MASS SPECTROMETRY [LARGE SCALE ANALYSIS]</scope>
    <source>
        <tissue>Cervix carcinoma</tissue>
        <tissue>Erythroleukemia</tissue>
    </source>
</reference>
<reference key="18">
    <citation type="journal article" date="2014" name="J. Proteomics">
        <title>An enzyme assisted RP-RPLC approach for in-depth analysis of human liver phosphoproteome.</title>
        <authorList>
            <person name="Bian Y."/>
            <person name="Song C."/>
            <person name="Cheng K."/>
            <person name="Dong M."/>
            <person name="Wang F."/>
            <person name="Huang J."/>
            <person name="Sun D."/>
            <person name="Wang L."/>
            <person name="Ye M."/>
            <person name="Zou H."/>
        </authorList>
    </citation>
    <scope>PHOSPHORYLATION [LARGE SCALE ANALYSIS] AT SER-38</scope>
    <scope>IDENTIFICATION BY MASS SPECTROMETRY [LARGE SCALE ANALYSIS]</scope>
    <source>
        <tissue>Liver</tissue>
    </source>
</reference>
<reference key="19">
    <citation type="journal article" date="2015" name="Proteomics">
        <title>N-terminome analysis of the human mitochondrial proteome.</title>
        <authorList>
            <person name="Vaca Jacome A.S."/>
            <person name="Rabilloud T."/>
            <person name="Schaeffer-Reiss C."/>
            <person name="Rompais M."/>
            <person name="Ayoub D."/>
            <person name="Lane L."/>
            <person name="Bairoch A."/>
            <person name="Van Dorsselaer A."/>
            <person name="Carapito C."/>
        </authorList>
    </citation>
    <scope>ACETYLATION [LARGE SCALE ANALYSIS] AT ALA-2</scope>
    <scope>CLEAVAGE OF INITIATOR METHIONINE [LARGE SCALE ANALYSIS]</scope>
    <scope>IDENTIFICATION BY MASS SPECTROMETRY [LARGE SCALE ANALYSIS]</scope>
</reference>
<reference key="20">
    <citation type="journal article" date="2019" name="J. Biol. Chem.">
        <title>Molecular recognition of S-nitrosothiol substrate by its cognate protein denitrosylase.</title>
        <authorList>
            <person name="Stomberski C.T."/>
            <person name="Zhou H.L."/>
            <person name="Wang L."/>
            <person name="van den Akker F."/>
            <person name="Stamler J.S."/>
        </authorList>
    </citation>
    <scope>FUNCTION</scope>
    <scope>CATALYTIC ACTIVITY</scope>
    <scope>BIOPHYSICOCHEMICAL PROPERTIES</scope>
    <scope>ACTIVE SITE</scope>
    <scope>MUTAGENESIS OF TYR-50 AND LYS-127</scope>
</reference>
<reference key="21">
    <citation type="journal article" date="2019" name="J. Biol. Chem.">
        <title>AKR1A1 is a novel mammalian S-nitroso-glutathione reductase.</title>
        <authorList>
            <person name="Stomberski C.T."/>
            <person name="Anand P."/>
            <person name="Venetos N.M."/>
            <person name="Hausladen A."/>
            <person name="Zhou H.L."/>
            <person name="Premont R.T."/>
            <person name="Stamler J.S."/>
        </authorList>
    </citation>
    <scope>FUNCTION</scope>
    <scope>CATALYTIC ACTIVITY</scope>
    <scope>BIOPHYSICOCHEMICAL PROPERTIES</scope>
    <scope>ACTIVE SITE</scope>
    <scope>MUTAGENESIS OF TYR-50; LYS-127 AND ARG-312</scope>
</reference>
<reference key="22">
    <citation type="journal article" date="1994" name="Acta Crystallogr. D">
        <title>Structures of human and porcine aldehyde reductase: an enzyme implicated in diabetic complications.</title>
        <authorList>
            <person name="El-Kabbani O."/>
            <person name="Green N.C."/>
            <person name="Lin G."/>
            <person name="Carson M."/>
            <person name="Narayana S.V.L."/>
            <person name="Moore K.M."/>
            <person name="Flynn T.G."/>
            <person name="DeLucas L.J."/>
        </authorList>
    </citation>
    <scope>X-RAY CRYSTALLOGRAPHY (2.48 ANGSTROMS)</scope>
</reference>
<feature type="initiator methionine" description="Removed" evidence="11 17 20">
    <location>
        <position position="1"/>
    </location>
</feature>
<feature type="chain" id="PRO_0000124617" description="Aldo-keto reductase family 1 member A1">
    <location>
        <begin position="2"/>
        <end position="325"/>
    </location>
</feature>
<feature type="active site" description="Proton donor" evidence="12 15 16">
    <location>
        <position position="50"/>
    </location>
</feature>
<feature type="binding site" evidence="1">
    <location>
        <begin position="11"/>
        <end position="20"/>
    </location>
    <ligand>
        <name>NADP(+)</name>
        <dbReference type="ChEBI" id="CHEBI:58349"/>
    </ligand>
</feature>
<feature type="binding site" evidence="2">
    <location>
        <position position="21"/>
    </location>
    <ligand>
        <name>NADP(+)</name>
        <dbReference type="ChEBI" id="CHEBI:58349"/>
    </ligand>
</feature>
<feature type="binding site" evidence="2">
    <location>
        <position position="22"/>
    </location>
    <ligand>
        <name>NADP(+)</name>
        <dbReference type="ChEBI" id="CHEBI:58349"/>
    </ligand>
</feature>
<feature type="binding site" evidence="2">
    <location>
        <position position="45"/>
    </location>
    <ligand>
        <name>NADP(+)</name>
        <dbReference type="ChEBI" id="CHEBI:58349"/>
    </ligand>
</feature>
<feature type="binding site" evidence="2">
    <location>
        <position position="162"/>
    </location>
    <ligand>
        <name>NADP(+)</name>
        <dbReference type="ChEBI" id="CHEBI:58349"/>
    </ligand>
</feature>
<feature type="binding site" evidence="2">
    <location>
        <position position="163"/>
    </location>
    <ligand>
        <name>NADP(+)</name>
        <dbReference type="ChEBI" id="CHEBI:58349"/>
    </ligand>
</feature>
<feature type="binding site" evidence="2">
    <location>
        <position position="211"/>
    </location>
    <ligand>
        <name>NADP(+)</name>
        <dbReference type="ChEBI" id="CHEBI:58349"/>
    </ligand>
</feature>
<feature type="binding site" evidence="2">
    <location>
        <position position="213"/>
    </location>
    <ligand>
        <name>NADP(+)</name>
        <dbReference type="ChEBI" id="CHEBI:58349"/>
    </ligand>
</feature>
<feature type="binding site" evidence="2">
    <location>
        <position position="215"/>
    </location>
    <ligand>
        <name>NADP(+)</name>
        <dbReference type="ChEBI" id="CHEBI:58349"/>
    </ligand>
</feature>
<feature type="binding site" evidence="2">
    <location>
        <position position="216"/>
    </location>
    <ligand>
        <name>NADP(+)</name>
        <dbReference type="ChEBI" id="CHEBI:58349"/>
    </ligand>
</feature>
<feature type="binding site" evidence="2">
    <location>
        <position position="263"/>
    </location>
    <ligand>
        <name>NADP(+)</name>
        <dbReference type="ChEBI" id="CHEBI:58349"/>
    </ligand>
</feature>
<feature type="binding site" evidence="2">
    <location>
        <position position="264"/>
    </location>
    <ligand>
        <name>NADP(+)</name>
        <dbReference type="ChEBI" id="CHEBI:58349"/>
    </ligand>
</feature>
<feature type="binding site" evidence="2">
    <location>
        <position position="265"/>
    </location>
    <ligand>
        <name>NADP(+)</name>
        <dbReference type="ChEBI" id="CHEBI:58349"/>
    </ligand>
</feature>
<feature type="binding site" evidence="2">
    <location>
        <position position="266"/>
    </location>
    <ligand>
        <name>NADP(+)</name>
        <dbReference type="ChEBI" id="CHEBI:58349"/>
    </ligand>
</feature>
<feature type="binding site" evidence="2">
    <location>
        <position position="269"/>
    </location>
    <ligand>
        <name>NADP(+)</name>
        <dbReference type="ChEBI" id="CHEBI:58349"/>
    </ligand>
</feature>
<feature type="binding site" evidence="2">
    <location>
        <position position="272"/>
    </location>
    <ligand>
        <name>NADP(+)</name>
        <dbReference type="ChEBI" id="CHEBI:58349"/>
    </ligand>
</feature>
<feature type="binding site" evidence="2">
    <location>
        <position position="273"/>
    </location>
    <ligand>
        <name>NADP(+)</name>
        <dbReference type="ChEBI" id="CHEBI:58349"/>
    </ligand>
</feature>
<feature type="site" description="Lowers pKa of active site Tyr" evidence="12">
    <location>
        <position position="80"/>
    </location>
</feature>
<feature type="modified residue" description="N-acetylalanine" evidence="17 20">
    <location>
        <position position="2"/>
    </location>
</feature>
<feature type="modified residue" description="Phosphoserine" evidence="3">
    <location>
        <position position="4"/>
    </location>
</feature>
<feature type="modified residue" description="Phosphoserine" evidence="19">
    <location>
        <position position="38"/>
    </location>
</feature>
<feature type="modified residue" description="N6-acetyllysine; alternate" evidence="4">
    <location>
        <position position="127"/>
    </location>
</feature>
<feature type="modified residue" description="N6-succinyllysine; alternate" evidence="4">
    <location>
        <position position="127"/>
    </location>
</feature>
<feature type="modified residue" description="N6-succinyllysine" evidence="4">
    <location>
        <position position="145"/>
    </location>
</feature>
<feature type="modified residue" description="Phosphoserine" evidence="18">
    <location>
        <position position="211"/>
    </location>
</feature>
<feature type="sequence variant" id="VAR_048212" description="Reduced activity towards daunorubicin; dbSNP:rs2229540." evidence="8">
    <original>N</original>
    <variation>S</variation>
    <location>
        <position position="52"/>
    </location>
</feature>
<feature type="sequence variant" id="VAR_058909" description="Reduced activity towards daunorubicin; dbSNP:rs6690497." evidence="8">
    <original>E</original>
    <variation>D</variation>
    <location>
        <position position="55"/>
    </location>
</feature>
<feature type="mutagenesis site" description="Abolished reductase activity." evidence="9 10">
    <original>Y</original>
    <variation>A</variation>
    <location>
        <position position="50"/>
    </location>
</feature>
<feature type="mutagenesis site" description="Complete loss of enzymatic activity." evidence="12">
    <original>Y</original>
    <variation>F</variation>
    <location>
        <position position="50"/>
    </location>
</feature>
<feature type="mutagenesis site" description="Complete loss of enzymatic activity." evidence="12">
    <original>Y</original>
    <variation>H</variation>
    <location>
        <position position="50"/>
    </location>
</feature>
<feature type="mutagenesis site" description="Complete loss of enzymatic activity." evidence="12">
    <original>K</original>
    <variation>M</variation>
    <location>
        <position position="80"/>
    </location>
</feature>
<feature type="mutagenesis site" description="Strong decrease in enzymatic activity." evidence="12">
    <original>H</original>
    <variation>Q</variation>
    <location>
        <position position="113"/>
    </location>
</feature>
<feature type="mutagenesis site" description="Abolished S-nitroso-CoA reductase activity without affecting ability to reduce S-nitrosoglutathione, glyceraldehyde or glucuronate." evidence="9 10">
    <original>K</original>
    <variation>A</variation>
    <location>
        <position position="127"/>
    </location>
</feature>
<feature type="mutagenesis site" description="No change in enzymatic activity." evidence="12">
    <original>I</original>
    <variation>A</variation>
    <location>
        <position position="299"/>
    </location>
</feature>
<feature type="mutagenesis site" description="No change in enzymatic activity." evidence="12">
    <original>I</original>
    <variation>C</variation>
    <location>
        <position position="299"/>
    </location>
</feature>
<feature type="mutagenesis site" description="No change in enzymatic activity." evidence="12">
    <original>V</original>
    <variation>C</variation>
    <location>
        <position position="300"/>
    </location>
</feature>
<feature type="mutagenesis site" description="Abolished S-nitrosoglutathione reductase activity without affecting ability to reduce S-nitroso-CoA." evidence="10">
    <original>R</original>
    <variation>A</variation>
    <location>
        <position position="312"/>
    </location>
</feature>
<feature type="sequence conflict" description="In Ref. 4; BAF85772." evidence="14" ref="4">
    <original>V</original>
    <variation>A</variation>
    <location>
        <position position="305"/>
    </location>
</feature>
<feature type="strand" evidence="21">
    <location>
        <begin position="5"/>
        <end position="7"/>
    </location>
</feature>
<feature type="strand" evidence="21">
    <location>
        <begin position="13"/>
        <end position="17"/>
    </location>
</feature>
<feature type="helix" evidence="21">
    <location>
        <begin position="26"/>
        <end position="39"/>
    </location>
</feature>
<feature type="strand" evidence="21">
    <location>
        <begin position="43"/>
        <end position="45"/>
    </location>
</feature>
<feature type="helix" evidence="21">
    <location>
        <begin position="48"/>
        <end position="50"/>
    </location>
</feature>
<feature type="helix" evidence="21">
    <location>
        <begin position="53"/>
        <end position="63"/>
    </location>
</feature>
<feature type="strand" evidence="21">
    <location>
        <begin position="68"/>
        <end position="70"/>
    </location>
</feature>
<feature type="helix" evidence="21">
    <location>
        <begin position="72"/>
        <end position="74"/>
    </location>
</feature>
<feature type="strand" evidence="21">
    <location>
        <begin position="76"/>
        <end position="81"/>
    </location>
</feature>
<feature type="helix" evidence="21">
    <location>
        <begin position="83"/>
        <end position="85"/>
    </location>
</feature>
<feature type="helix" evidence="21">
    <location>
        <begin position="88"/>
        <end position="102"/>
    </location>
</feature>
<feature type="strand" evidence="21">
    <location>
        <begin position="107"/>
        <end position="113"/>
    </location>
</feature>
<feature type="strand" evidence="21">
    <location>
        <begin position="115"/>
        <end position="118"/>
    </location>
</feature>
<feature type="strand" evidence="21">
    <location>
        <begin position="120"/>
        <end position="122"/>
    </location>
</feature>
<feature type="helix" evidence="21">
    <location>
        <begin position="140"/>
        <end position="153"/>
    </location>
</feature>
<feature type="strand" evidence="21">
    <location>
        <begin position="155"/>
        <end position="163"/>
    </location>
</feature>
<feature type="helix" evidence="21">
    <location>
        <begin position="166"/>
        <end position="173"/>
    </location>
</feature>
<feature type="strand" evidence="21">
    <location>
        <begin position="182"/>
        <end position="186"/>
    </location>
</feature>
<feature type="helix" evidence="21">
    <location>
        <begin position="194"/>
        <end position="203"/>
    </location>
</feature>
<feature type="strand" evidence="21">
    <location>
        <begin position="206"/>
        <end position="210"/>
    </location>
</feature>
<feature type="helix" evidence="21">
    <location>
        <begin position="232"/>
        <end position="241"/>
    </location>
</feature>
<feature type="helix" evidence="21">
    <location>
        <begin position="245"/>
        <end position="255"/>
    </location>
</feature>
<feature type="helix" evidence="21">
    <location>
        <begin position="267"/>
        <end position="274"/>
    </location>
</feature>
<feature type="helix" evidence="21">
    <location>
        <begin position="283"/>
        <end position="290"/>
    </location>
</feature>
<feature type="strand" evidence="21">
    <location>
        <begin position="302"/>
        <end position="305"/>
    </location>
</feature>
<feature type="strand" evidence="21">
    <location>
        <begin position="308"/>
        <end position="313"/>
    </location>
</feature>
<feature type="strand" evidence="21">
    <location>
        <begin position="320"/>
        <end position="323"/>
    </location>
</feature>
<dbReference type="EC" id="1.1.1.2" evidence="6"/>
<dbReference type="EC" id="1.1.1.372" evidence="6"/>
<dbReference type="EC" id="1.1.1.54" evidence="6"/>
<dbReference type="EC" id="1.1.1.19" evidence="3"/>
<dbReference type="EC" id="1.1.1.20" evidence="3"/>
<dbReference type="EC" id="1.6.-.-" evidence="13"/>
<dbReference type="EMBL" id="J04794">
    <property type="protein sequence ID" value="AAA51711.1"/>
    <property type="molecule type" value="mRNA"/>
</dbReference>
<dbReference type="EMBL" id="AF036683">
    <property type="protein sequence ID" value="AAB92369.1"/>
    <property type="molecule type" value="Genomic_DNA"/>
</dbReference>
<dbReference type="EMBL" id="AF036680">
    <property type="protein sequence ID" value="AAB92369.1"/>
    <property type="status" value="JOINED"/>
    <property type="molecule type" value="Genomic_DNA"/>
</dbReference>
<dbReference type="EMBL" id="AF036681">
    <property type="protein sequence ID" value="AAB92369.1"/>
    <property type="status" value="JOINED"/>
    <property type="molecule type" value="Genomic_DNA"/>
</dbReference>
<dbReference type="EMBL" id="AF036682">
    <property type="protein sequence ID" value="AAB92369.1"/>
    <property type="status" value="JOINED"/>
    <property type="molecule type" value="Genomic_DNA"/>
</dbReference>
<dbReference type="EMBL" id="AF112485">
    <property type="protein sequence ID" value="AAF01260.1"/>
    <property type="molecule type" value="Genomic_DNA"/>
</dbReference>
<dbReference type="EMBL" id="AF112484">
    <property type="protein sequence ID" value="AAF01260.1"/>
    <property type="status" value="JOINED"/>
    <property type="molecule type" value="Genomic_DNA"/>
</dbReference>
<dbReference type="EMBL" id="AK293083">
    <property type="protein sequence ID" value="BAF85772.1"/>
    <property type="molecule type" value="mRNA"/>
</dbReference>
<dbReference type="EMBL" id="CR457010">
    <property type="protein sequence ID" value="CAG33291.1"/>
    <property type="molecule type" value="mRNA"/>
</dbReference>
<dbReference type="EMBL" id="BT007003">
    <property type="protein sequence ID" value="AAP35649.1"/>
    <property type="molecule type" value="mRNA"/>
</dbReference>
<dbReference type="EMBL" id="AL355480">
    <property type="status" value="NOT_ANNOTATED_CDS"/>
    <property type="molecule type" value="Genomic_DNA"/>
</dbReference>
<dbReference type="EMBL" id="CH471059">
    <property type="protein sequence ID" value="EAX06970.1"/>
    <property type="molecule type" value="Genomic_DNA"/>
</dbReference>
<dbReference type="EMBL" id="CH471059">
    <property type="protein sequence ID" value="EAX06971.1"/>
    <property type="molecule type" value="Genomic_DNA"/>
</dbReference>
<dbReference type="EMBL" id="CH471059">
    <property type="protein sequence ID" value="EAX06972.1"/>
    <property type="molecule type" value="Genomic_DNA"/>
</dbReference>
<dbReference type="EMBL" id="CH471059">
    <property type="protein sequence ID" value="EAX06974.1"/>
    <property type="molecule type" value="Genomic_DNA"/>
</dbReference>
<dbReference type="EMBL" id="BC000670">
    <property type="protein sequence ID" value="AAH00670.1"/>
    <property type="molecule type" value="mRNA"/>
</dbReference>
<dbReference type="EMBL" id="BC005394">
    <property type="protein sequence ID" value="AAH05394.1"/>
    <property type="molecule type" value="mRNA"/>
</dbReference>
<dbReference type="CCDS" id="CCDS523.1"/>
<dbReference type="PIR" id="A33851">
    <property type="entry name" value="A33851"/>
</dbReference>
<dbReference type="RefSeq" id="NP_001189342.1">
    <property type="nucleotide sequence ID" value="NM_001202413.2"/>
</dbReference>
<dbReference type="RefSeq" id="NP_001189343.1">
    <property type="nucleotide sequence ID" value="NM_001202414.2"/>
</dbReference>
<dbReference type="RefSeq" id="NP_006057.1">
    <property type="nucleotide sequence ID" value="NM_006066.4"/>
</dbReference>
<dbReference type="RefSeq" id="NP_697021.1">
    <property type="nucleotide sequence ID" value="NM_153326.3"/>
</dbReference>
<dbReference type="PDB" id="2ALR">
    <property type="method" value="X-ray"/>
    <property type="resolution" value="2.48 A"/>
    <property type="chains" value="A=2-325"/>
</dbReference>
<dbReference type="PDBsum" id="2ALR"/>
<dbReference type="SMR" id="P14550"/>
<dbReference type="BioGRID" id="115610">
    <property type="interactions" value="62"/>
</dbReference>
<dbReference type="FunCoup" id="P14550">
    <property type="interactions" value="1135"/>
</dbReference>
<dbReference type="IntAct" id="P14550">
    <property type="interactions" value="26"/>
</dbReference>
<dbReference type="MINT" id="P14550"/>
<dbReference type="STRING" id="9606.ENSP00000361140"/>
<dbReference type="BindingDB" id="P14550"/>
<dbReference type="ChEMBL" id="CHEMBL2246"/>
<dbReference type="DrugBank" id="DB08904">
    <property type="generic name" value="Certolizumab pegol"/>
</dbReference>
<dbReference type="DrugBank" id="DB09130">
    <property type="generic name" value="Copper"/>
</dbReference>
<dbReference type="DrugBank" id="DB00997">
    <property type="generic name" value="Doxorubicin"/>
</dbReference>
<dbReference type="DrugBank" id="DB00898">
    <property type="generic name" value="Ethanol"/>
</dbReference>
<dbReference type="DrugBank" id="DB06077">
    <property type="generic name" value="Lumateperone"/>
</dbReference>
<dbReference type="DrugBank" id="DB00157">
    <property type="generic name" value="NADH"/>
</dbReference>
<dbReference type="DrugBank" id="DB03461">
    <property type="generic name" value="Nicotinamide adenine dinucleotide phosphate"/>
</dbReference>
<dbReference type="DrugBank" id="DB06207">
    <property type="generic name" value="Silodosin"/>
</dbReference>
<dbReference type="DrugBank" id="DB02383">
    <property type="generic name" value="Tolrestat"/>
</dbReference>
<dbReference type="DrugCentral" id="P14550"/>
<dbReference type="GlyGen" id="P14550">
    <property type="glycosylation" value="1 site, 1 O-linked glycan (1 site)"/>
</dbReference>
<dbReference type="iPTMnet" id="P14550"/>
<dbReference type="MetOSite" id="P14550"/>
<dbReference type="PhosphoSitePlus" id="P14550"/>
<dbReference type="SwissPalm" id="P14550"/>
<dbReference type="BioMuta" id="AKR1A1"/>
<dbReference type="DMDM" id="113600"/>
<dbReference type="REPRODUCTION-2DPAGE" id="IPI00220271"/>
<dbReference type="REPRODUCTION-2DPAGE" id="P14550"/>
<dbReference type="CPTAC" id="CPTAC-10"/>
<dbReference type="CPTAC" id="CPTAC-9"/>
<dbReference type="jPOST" id="P14550"/>
<dbReference type="MassIVE" id="P14550"/>
<dbReference type="PaxDb" id="9606-ENSP00000361140"/>
<dbReference type="PeptideAtlas" id="P14550"/>
<dbReference type="PRIDE" id="P14550"/>
<dbReference type="ProteomicsDB" id="53058"/>
<dbReference type="Pumba" id="P14550"/>
<dbReference type="Antibodypedia" id="3338">
    <property type="antibodies" value="593 antibodies from 36 providers"/>
</dbReference>
<dbReference type="DNASU" id="10327"/>
<dbReference type="Ensembl" id="ENST00000351829.9">
    <property type="protein sequence ID" value="ENSP00000312606.4"/>
    <property type="gene ID" value="ENSG00000117448.14"/>
</dbReference>
<dbReference type="Ensembl" id="ENST00000372070.7">
    <property type="protein sequence ID" value="ENSP00000361140.3"/>
    <property type="gene ID" value="ENSG00000117448.14"/>
</dbReference>
<dbReference type="Ensembl" id="ENST00000621846.4">
    <property type="protein sequence ID" value="ENSP00000480713.1"/>
    <property type="gene ID" value="ENSG00000117448.14"/>
</dbReference>
<dbReference type="GeneID" id="10327"/>
<dbReference type="KEGG" id="hsa:10327"/>
<dbReference type="MANE-Select" id="ENST00000351829.9">
    <property type="protein sequence ID" value="ENSP00000312606.4"/>
    <property type="RefSeq nucleotide sequence ID" value="NM_153326.3"/>
    <property type="RefSeq protein sequence ID" value="NP_697021.1"/>
</dbReference>
<dbReference type="AGR" id="HGNC:380"/>
<dbReference type="CTD" id="10327"/>
<dbReference type="DisGeNET" id="10327"/>
<dbReference type="GeneCards" id="AKR1A1"/>
<dbReference type="HGNC" id="HGNC:380">
    <property type="gene designation" value="AKR1A1"/>
</dbReference>
<dbReference type="HPA" id="ENSG00000117448">
    <property type="expression patterns" value="Low tissue specificity"/>
</dbReference>
<dbReference type="MIM" id="103830">
    <property type="type" value="gene"/>
</dbReference>
<dbReference type="neXtProt" id="NX_P14550"/>
<dbReference type="OpenTargets" id="ENSG00000117448"/>
<dbReference type="PharmGKB" id="PA24674"/>
<dbReference type="VEuPathDB" id="HostDB:ENSG00000117448"/>
<dbReference type="eggNOG" id="KOG1577">
    <property type="taxonomic scope" value="Eukaryota"/>
</dbReference>
<dbReference type="GeneTree" id="ENSGT00940000156539"/>
<dbReference type="HOGENOM" id="CLU_023205_0_0_1"/>
<dbReference type="InParanoid" id="P14550"/>
<dbReference type="OMA" id="MVNQIFL"/>
<dbReference type="OrthoDB" id="416253at2759"/>
<dbReference type="PAN-GO" id="P14550">
    <property type="GO annotations" value="2 GO annotations based on evolutionary models"/>
</dbReference>
<dbReference type="PhylomeDB" id="P14550"/>
<dbReference type="TreeFam" id="TF106492"/>
<dbReference type="BRENDA" id="1.1.1.2">
    <property type="organism ID" value="2681"/>
</dbReference>
<dbReference type="PathwayCommons" id="P14550"/>
<dbReference type="Reactome" id="R-HSA-156590">
    <property type="pathway name" value="Glutathione conjugation"/>
</dbReference>
<dbReference type="Reactome" id="R-HSA-5661270">
    <property type="pathway name" value="Formation of xylulose-5-phosphate"/>
</dbReference>
<dbReference type="SABIO-RK" id="P14550"/>
<dbReference type="SignaLink" id="P14550"/>
<dbReference type="BioGRID-ORCS" id="10327">
    <property type="hits" value="13 hits in 1159 CRISPR screens"/>
</dbReference>
<dbReference type="CD-CODE" id="91857CE7">
    <property type="entry name" value="Nucleolus"/>
</dbReference>
<dbReference type="CD-CODE" id="FB4E32DD">
    <property type="entry name" value="Presynaptic clusters and postsynaptic densities"/>
</dbReference>
<dbReference type="ChiTaRS" id="AKR1A1">
    <property type="organism name" value="human"/>
</dbReference>
<dbReference type="EvolutionaryTrace" id="P14550"/>
<dbReference type="GeneWiki" id="Aldo-keto_reductase_family_1,_member_A1"/>
<dbReference type="GenomeRNAi" id="10327"/>
<dbReference type="Pharos" id="P14550">
    <property type="development level" value="Tchem"/>
</dbReference>
<dbReference type="PRO" id="PR:P14550"/>
<dbReference type="Proteomes" id="UP000005640">
    <property type="component" value="Chromosome 1"/>
</dbReference>
<dbReference type="RNAct" id="P14550">
    <property type="molecule type" value="protein"/>
</dbReference>
<dbReference type="Bgee" id="ENSG00000117448">
    <property type="expression patterns" value="Expressed in nephron tubule and 209 other cell types or tissues"/>
</dbReference>
<dbReference type="ExpressionAtlas" id="P14550">
    <property type="expression patterns" value="baseline and differential"/>
</dbReference>
<dbReference type="GO" id="GO:0016324">
    <property type="term" value="C:apical plasma membrane"/>
    <property type="evidence" value="ECO:0000250"/>
    <property type="project" value="UniProtKB"/>
</dbReference>
<dbReference type="GO" id="GO:0005829">
    <property type="term" value="C:cytosol"/>
    <property type="evidence" value="ECO:0000250"/>
    <property type="project" value="UniProtKB"/>
</dbReference>
<dbReference type="GO" id="GO:0070062">
    <property type="term" value="C:extracellular exosome"/>
    <property type="evidence" value="ECO:0007005"/>
    <property type="project" value="UniProtKB"/>
</dbReference>
<dbReference type="GO" id="GO:0005615">
    <property type="term" value="C:extracellular space"/>
    <property type="evidence" value="ECO:0007005"/>
    <property type="project" value="UniProtKB"/>
</dbReference>
<dbReference type="GO" id="GO:0045202">
    <property type="term" value="C:synapse"/>
    <property type="evidence" value="ECO:0007669"/>
    <property type="project" value="Ensembl"/>
</dbReference>
<dbReference type="GO" id="GO:0004033">
    <property type="term" value="F:aldo-keto reductase (NADPH) activity"/>
    <property type="evidence" value="ECO:0000304"/>
    <property type="project" value="Reactome"/>
</dbReference>
<dbReference type="GO" id="GO:0004032">
    <property type="term" value="F:aldose reductase (NADPH) activity"/>
    <property type="evidence" value="ECO:0000318"/>
    <property type="project" value="GO_Central"/>
</dbReference>
<dbReference type="GO" id="GO:0047655">
    <property type="term" value="F:allyl-alcohol dehydrogenase activity"/>
    <property type="evidence" value="ECO:0007669"/>
    <property type="project" value="UniProtKB-EC"/>
</dbReference>
<dbReference type="GO" id="GO:0047941">
    <property type="term" value="F:glucuronolactone reductase activity"/>
    <property type="evidence" value="ECO:0000314"/>
    <property type="project" value="UniProtKB"/>
</dbReference>
<dbReference type="GO" id="GO:0047956">
    <property type="term" value="F:glycerol dehydrogenase (NADP+) activity"/>
    <property type="evidence" value="ECO:0007669"/>
    <property type="project" value="RHEA"/>
</dbReference>
<dbReference type="GO" id="GO:0047939">
    <property type="term" value="F:L-glucuronate reductase activity"/>
    <property type="evidence" value="ECO:0000314"/>
    <property type="project" value="UniProtKB"/>
</dbReference>
<dbReference type="GO" id="GO:1990002">
    <property type="term" value="F:methylglyoxal reductase (NADPH) (acetol producing) activity"/>
    <property type="evidence" value="ECO:0007669"/>
    <property type="project" value="RHEA"/>
</dbReference>
<dbReference type="GO" id="GO:0080007">
    <property type="term" value="F:S-nitrosoglutathione reductase (NADH) activity"/>
    <property type="evidence" value="ECO:0007669"/>
    <property type="project" value="Ensembl"/>
</dbReference>
<dbReference type="GO" id="GO:0160163">
    <property type="term" value="F:S-nitrosoglutathione reductase (NADPH) activity"/>
    <property type="evidence" value="ECO:0007669"/>
    <property type="project" value="RHEA"/>
</dbReference>
<dbReference type="GO" id="GO:0046185">
    <property type="term" value="P:aldehyde catabolic process"/>
    <property type="evidence" value="ECO:0007669"/>
    <property type="project" value="Ensembl"/>
</dbReference>
<dbReference type="GO" id="GO:0110095">
    <property type="term" value="P:cellular detoxification of aldehyde"/>
    <property type="evidence" value="ECO:0000250"/>
    <property type="project" value="UniProtKB"/>
</dbReference>
<dbReference type="GO" id="GO:0019640">
    <property type="term" value="P:D-glucuronate catabolic process to D-xylulose 5-phosphate"/>
    <property type="evidence" value="ECO:0000304"/>
    <property type="project" value="Reactome"/>
</dbReference>
<dbReference type="GO" id="GO:0044597">
    <property type="term" value="P:daunorubicin metabolic process"/>
    <property type="evidence" value="ECO:0000314"/>
    <property type="project" value="UniProtKB"/>
</dbReference>
<dbReference type="GO" id="GO:0044598">
    <property type="term" value="P:doxorubicin metabolic process"/>
    <property type="evidence" value="ECO:0000314"/>
    <property type="project" value="UniProtKB"/>
</dbReference>
<dbReference type="GO" id="GO:1901687">
    <property type="term" value="P:glutathione derivative biosynthetic process"/>
    <property type="evidence" value="ECO:0000304"/>
    <property type="project" value="Reactome"/>
</dbReference>
<dbReference type="GO" id="GO:0006629">
    <property type="term" value="P:lipid metabolic process"/>
    <property type="evidence" value="ECO:0007669"/>
    <property type="project" value="UniProtKB-KW"/>
</dbReference>
<dbReference type="GO" id="GO:0043066">
    <property type="term" value="P:negative regulation of apoptotic process"/>
    <property type="evidence" value="ECO:0007669"/>
    <property type="project" value="Ensembl"/>
</dbReference>
<dbReference type="CDD" id="cd19106">
    <property type="entry name" value="AKR_AKR1A1-4"/>
    <property type="match status" value="1"/>
</dbReference>
<dbReference type="FunFam" id="3.20.20.100:FF:000006">
    <property type="entry name" value="Aldo-keto reductase family 1 member A1"/>
    <property type="match status" value="1"/>
</dbReference>
<dbReference type="Gene3D" id="3.20.20.100">
    <property type="entry name" value="NADP-dependent oxidoreductase domain"/>
    <property type="match status" value="1"/>
</dbReference>
<dbReference type="InterPro" id="IPR020471">
    <property type="entry name" value="AKR"/>
</dbReference>
<dbReference type="InterPro" id="IPR044481">
    <property type="entry name" value="AKR1A"/>
</dbReference>
<dbReference type="InterPro" id="IPR018170">
    <property type="entry name" value="Aldo/ket_reductase_CS"/>
</dbReference>
<dbReference type="InterPro" id="IPR023210">
    <property type="entry name" value="NADP_OxRdtase_dom"/>
</dbReference>
<dbReference type="InterPro" id="IPR036812">
    <property type="entry name" value="NADP_OxRdtase_dom_sf"/>
</dbReference>
<dbReference type="PANTHER" id="PTHR11732">
    <property type="entry name" value="ALDO/KETO REDUCTASE"/>
    <property type="match status" value="1"/>
</dbReference>
<dbReference type="Pfam" id="PF00248">
    <property type="entry name" value="Aldo_ket_red"/>
    <property type="match status" value="1"/>
</dbReference>
<dbReference type="PIRSF" id="PIRSF000097">
    <property type="entry name" value="AKR"/>
    <property type="match status" value="1"/>
</dbReference>
<dbReference type="PRINTS" id="PR00069">
    <property type="entry name" value="ALDKETRDTASE"/>
</dbReference>
<dbReference type="SUPFAM" id="SSF51430">
    <property type="entry name" value="NAD(P)-linked oxidoreductase"/>
    <property type="match status" value="1"/>
</dbReference>
<dbReference type="PROSITE" id="PS00798">
    <property type="entry name" value="ALDOKETO_REDUCTASE_1"/>
    <property type="match status" value="1"/>
</dbReference>
<dbReference type="PROSITE" id="PS00062">
    <property type="entry name" value="ALDOKETO_REDUCTASE_2"/>
    <property type="match status" value="1"/>
</dbReference>
<dbReference type="PROSITE" id="PS00063">
    <property type="entry name" value="ALDOKETO_REDUCTASE_3"/>
    <property type="match status" value="1"/>
</dbReference>
<gene>
    <name type="primary">AKR1A1</name>
    <name type="synonym">ALDR1</name>
    <name type="synonym">ALR</name>
</gene>
<accession>P14550</accession>
<accession>A8KAL8</accession>
<accession>D3DQ04</accession>
<accession>Q6IAZ4</accession>
<evidence type="ECO:0000250" key="1">
    <source>
        <dbReference type="UniProtKB" id="O60218"/>
    </source>
</evidence>
<evidence type="ECO:0000250" key="2">
    <source>
        <dbReference type="UniProtKB" id="P50578"/>
    </source>
</evidence>
<evidence type="ECO:0000250" key="3">
    <source>
        <dbReference type="UniProtKB" id="P51635"/>
    </source>
</evidence>
<evidence type="ECO:0000250" key="4">
    <source>
        <dbReference type="UniProtKB" id="Q9JII6"/>
    </source>
</evidence>
<evidence type="ECO:0000269" key="5">
    <source>
    </source>
</evidence>
<evidence type="ECO:0000269" key="6">
    <source>
    </source>
</evidence>
<evidence type="ECO:0000269" key="7">
    <source>
    </source>
</evidence>
<evidence type="ECO:0000269" key="8">
    <source>
    </source>
</evidence>
<evidence type="ECO:0000269" key="9">
    <source>
    </source>
</evidence>
<evidence type="ECO:0000269" key="10">
    <source>
    </source>
</evidence>
<evidence type="ECO:0000269" key="11">
    <source>
    </source>
</evidence>
<evidence type="ECO:0000269" key="12">
    <source>
    </source>
</evidence>
<evidence type="ECO:0000303" key="13">
    <source>
    </source>
</evidence>
<evidence type="ECO:0000305" key="14"/>
<evidence type="ECO:0000305" key="15">
    <source>
    </source>
</evidence>
<evidence type="ECO:0000305" key="16">
    <source>
    </source>
</evidence>
<evidence type="ECO:0007744" key="17">
    <source>
    </source>
</evidence>
<evidence type="ECO:0007744" key="18">
    <source>
    </source>
</evidence>
<evidence type="ECO:0007744" key="19">
    <source>
    </source>
</evidence>
<evidence type="ECO:0007744" key="20">
    <source>
    </source>
</evidence>
<evidence type="ECO:0007829" key="21">
    <source>
        <dbReference type="PDB" id="2ALR"/>
    </source>
</evidence>
<keyword id="KW-0002">3D-structure</keyword>
<keyword id="KW-0007">Acetylation</keyword>
<keyword id="KW-1003">Cell membrane</keyword>
<keyword id="KW-0963">Cytoplasm</keyword>
<keyword id="KW-0903">Direct protein sequencing</keyword>
<keyword id="KW-0443">Lipid metabolism</keyword>
<keyword id="KW-0472">Membrane</keyword>
<keyword id="KW-0521">NADP</keyword>
<keyword id="KW-0560">Oxidoreductase</keyword>
<keyword id="KW-0597">Phosphoprotein</keyword>
<keyword id="KW-1267">Proteomics identification</keyword>
<keyword id="KW-1185">Reference proteome</keyword>
<name>AK1A1_HUMAN</name>